<name>SOX10_HUMAN</name>
<feature type="chain" id="PRO_0000048746" description="Transcription factor SOX-10">
    <location>
        <begin position="1"/>
        <end position="466"/>
    </location>
</feature>
<feature type="DNA-binding region" description="HMG box" evidence="4">
    <location>
        <begin position="104"/>
        <end position="172"/>
    </location>
</feature>
<feature type="region of interest" description="Disordered" evidence="5">
    <location>
        <begin position="1"/>
        <end position="67"/>
    </location>
</feature>
<feature type="region of interest" description="Dimerization (DIM)" evidence="18">
    <location>
        <begin position="62"/>
        <end position="102"/>
    </location>
</feature>
<feature type="region of interest" description="Disordered" evidence="5">
    <location>
        <begin position="160"/>
        <end position="199"/>
    </location>
</feature>
<feature type="region of interest" description="Disordered" evidence="5">
    <location>
        <begin position="212"/>
        <end position="274"/>
    </location>
</feature>
<feature type="region of interest" description="Transactivation domain (TAM)" evidence="18">
    <location>
        <begin position="228"/>
        <end position="310"/>
    </location>
</feature>
<feature type="region of interest" description="Transactivation domain (TAC)" evidence="18">
    <location>
        <begin position="353"/>
        <end position="466"/>
    </location>
</feature>
<feature type="region of interest" description="Disordered" evidence="5">
    <location>
        <begin position="354"/>
        <end position="375"/>
    </location>
</feature>
<feature type="region of interest" description="Disordered" evidence="5">
    <location>
        <begin position="433"/>
        <end position="466"/>
    </location>
</feature>
<feature type="short sequence motif" description="Nuclear export signal">
    <location>
        <begin position="134"/>
        <end position="145"/>
    </location>
</feature>
<feature type="compositionally biased region" description="Low complexity" evidence="5">
    <location>
        <begin position="23"/>
        <end position="32"/>
    </location>
</feature>
<feature type="compositionally biased region" description="Basic and acidic residues" evidence="5">
    <location>
        <begin position="160"/>
        <end position="173"/>
    </location>
</feature>
<feature type="compositionally biased region" description="Basic and acidic residues" evidence="5">
    <location>
        <begin position="254"/>
        <end position="271"/>
    </location>
</feature>
<feature type="compositionally biased region" description="Polar residues" evidence="5">
    <location>
        <begin position="440"/>
        <end position="466"/>
    </location>
</feature>
<feature type="modified residue" description="Phosphoserine" evidence="20">
    <location>
        <position position="24"/>
    </location>
</feature>
<feature type="splice variant" id="VSP_053874" description="In isoform 2." evidence="17">
    <location>
        <begin position="262"/>
        <end position="441"/>
    </location>
</feature>
<feature type="sequence variant" id="VAR_066747" description="In WS4C; loss of DNA binding and transactivation capacity." evidence="13">
    <original>R</original>
    <variation>W</variation>
    <location>
        <position position="106"/>
    </location>
</feature>
<feature type="sequence variant" id="VAR_072981" description="Found in a patient with Kallmann syndrome." evidence="15">
    <original>M</original>
    <variation>T</variation>
    <location>
        <position position="108"/>
    </location>
</feature>
<feature type="sequence variant" id="VAR_072982" description="Found in a patient with Kallmann syndrome." evidence="15">
    <original>F</original>
    <variation>V</variation>
    <location>
        <position position="111"/>
    </location>
</feature>
<feature type="sequence variant" id="VAR_066748" description="In WS2E and PCWH; increased DNA binding capacity." evidence="13">
    <original>M</original>
    <variation>I</variation>
    <location>
        <position position="112"/>
    </location>
</feature>
<feature type="sequence variant" id="VAR_066749" description="In PCWH; reduced DNA binding capacity." evidence="13">
    <original>N</original>
    <variation>H</variation>
    <location>
        <position position="131"/>
    </location>
</feature>
<feature type="sequence variant" id="VAR_072983" description="Found in a patient with Kallmann syndrome." evidence="15">
    <original>S</original>
    <variation>G</variation>
    <location>
        <position position="135"/>
    </location>
</feature>
<feature type="sequence variant" id="VAR_021386" description="In WS2E; without neurologic involvement; dbSNP:rs74315515." evidence="6">
    <original>S</original>
    <variation>T</variation>
    <location>
        <position position="135"/>
    </location>
</feature>
<feature type="sequence variant" id="VAR_066750" description="In WS4C; loss of DNA binding and transactivation capacity." evidence="13">
    <original>L</original>
    <variation>P</variation>
    <location>
        <position position="145"/>
    </location>
</feature>
<feature type="sequence variant" id="VAR_066751" description="In PCWH; loss of DNA binding and transactivation capacity." evidence="13">
    <original>K</original>
    <variation>N</variation>
    <location>
        <position position="150"/>
    </location>
</feature>
<feature type="sequence variant" id="VAR_072984" description="Found in a patient with Kallmann syndrome; dbSNP:rs1463736052." evidence="15">
    <original>R</original>
    <variation>C</variation>
    <location>
        <position position="151"/>
    </location>
</feature>
<feature type="sequence variant" id="VAR_066752" description="In WS4C; loss of DNA binding and transactivation capacity; dbSNP:rs121909117." evidence="11 13">
    <original>A</original>
    <variation>V</variation>
    <location>
        <position position="157"/>
    </location>
</feature>
<feature type="sequence variant" id="VAR_072985" description="Found in a patient with Kallmann syndrome." evidence="15">
    <original>R</original>
    <variation>C</variation>
    <location>
        <position position="161"/>
    </location>
</feature>
<feature type="sequence variant" id="VAR_066753" description="In WS2E; reduced DNA binding capacity; dbSNP:rs750566714." evidence="13">
    <original>R</original>
    <variation>H</variation>
    <location>
        <position position="161"/>
    </location>
</feature>
<feature type="sequence variant" id="VAR_003743" description="In WS4C." evidence="16">
    <original>R</original>
    <variation>RLR</variation>
    <location>
        <position position="161"/>
    </location>
</feature>
<feature type="sequence variant" id="VAR_066754" description="In PCWH; without Hirschsprung disease; reduced DNA binding capacity; dbSNP:rs267607081." evidence="12 13">
    <original>Q</original>
    <variation>P</variation>
    <location>
        <position position="174"/>
    </location>
</feature>
<feature type="sequence variant" id="VAR_066755" description="In PCWH; reduced DNA binding capacity." evidence="13">
    <original>P</original>
    <variation>A</variation>
    <location>
        <position position="175"/>
    </location>
</feature>
<feature type="sequence variant" id="VAR_066756" description="In PCWH; reduced DNA binding capacity." evidence="13">
    <original>P</original>
    <variation>L</variation>
    <location>
        <position position="175"/>
    </location>
</feature>
<feature type="sequence variant" id="VAR_066757" description="In PCWH; reduced DNA binding capacity." evidence="13">
    <original>P</original>
    <variation>R</variation>
    <location>
        <position position="175"/>
    </location>
</feature>
<feature type="sequence variant" id="VAR_066758" description="In PCWH." evidence="13">
    <original>G</original>
    <variation>R</variation>
    <location>
        <position position="321"/>
    </location>
</feature>
<feature type="sequence conflict" description="In Ref. 5; CAG38808." evidence="19" ref="5">
    <original>P</original>
    <variation>L</variation>
    <location>
        <position position="222"/>
    </location>
</feature>
<feature type="sequence conflict" description="In Ref. 5; CAG38808." evidence="19" ref="5">
    <original>T</original>
    <variation>M</variation>
    <location>
        <position position="461"/>
    </location>
</feature>
<sequence length="466" mass="49911">MAEEQDLSEVELSPVGSEEPRCLSPGSAPSLGPDGGGGGSGLRASPGPGELGKVKKEQQDGEADDDKFPVCIREAVSQVLSGYDWTLVPMPVRVNGASKSKPHVKRPMNAFMVWAQAARRKLADQYPHLHNAELSKTLGKLWRLLNESDKRPFIEEAERLRMQHKKDHPDYKYQPRRRKNGKAAQGEAECPGGEAEQGGTAAIQAHYKSAHLDHRHPGEGSPMSDGNPEHPSGQSHGPPTPPTTPKTELQSGKADPKRDGRSMGEGGKPHIDFGNVDIGEISHEVMSNMETFDVAELDQYLPPNGHPGHVSSYSAAGYGLGSALAVASGHSAWISKPPGVALPTVSPPGVDAKAQVKTETAGPQGPPHYTDQPSTSQIAYTSLSLPHYGSAFPSISRPQFDYSDHQPSGPYYGHSGQASGLYSAFSYMGPSQRPLYTAISDPSPSGPQSHSPTHWEQPVYTTLSRP</sequence>
<reference key="1">
    <citation type="journal article" date="1998" name="Nat. Genet.">
        <title>SOX10 mutations in patients with Waardenburg-Hirschsprung disease.</title>
        <authorList>
            <person name="Pingault V."/>
            <person name="Bondurand N."/>
            <person name="Kuhlbrodt K."/>
            <person name="Goerich D.E."/>
            <person name="Prehu M.O."/>
            <person name="Puliti A."/>
            <person name="Herbarth B."/>
            <person name="Hermans-Borgmeyer I."/>
            <person name="Legius E."/>
            <person name="Matthijs G."/>
            <person name="Amiel J."/>
            <person name="Lyonnet S."/>
            <person name="Ceccherini I."/>
            <person name="Romeo G."/>
            <person name="Clayton-Smith J."/>
            <person name="Read A.P."/>
            <person name="Wegner M."/>
            <person name="Goossens M."/>
        </authorList>
    </citation>
    <scope>NUCLEOTIDE SEQUENCE [MRNA] (ISOFORM 1)</scope>
    <scope>VARIANT WS4C LEU-ARG-161 INS</scope>
</reference>
<reference key="2">
    <citation type="journal article" date="1998" name="Hum. Genet.">
        <title>The SOX10/Sox10 gene from human and mouse: sequence, expression, and transactivation by the encoded HMG domain transcription factor.</title>
        <authorList>
            <person name="Pusch C."/>
            <person name="Hustert E."/>
            <person name="Pfeifer D."/>
            <person name="Sudbeck P."/>
            <person name="Kist R."/>
            <person name="Roe B."/>
            <person name="Wang Z."/>
            <person name="Balling R."/>
            <person name="Blin N."/>
            <person name="Scherer G."/>
        </authorList>
    </citation>
    <scope>NUCLEOTIDE SEQUENCE [GENOMIC DNA]</scope>
</reference>
<reference key="3">
    <citation type="journal article" date="2004" name="Genome Biol.">
        <title>A genome annotation-driven approach to cloning the human ORFeome.</title>
        <authorList>
            <person name="Collins J.E."/>
            <person name="Wright C.L."/>
            <person name="Edwards C.A."/>
            <person name="Davis M.P."/>
            <person name="Grinham J.A."/>
            <person name="Cole C.G."/>
            <person name="Goward M.E."/>
            <person name="Aguado B."/>
            <person name="Mallya M."/>
            <person name="Mokrab Y."/>
            <person name="Huckle E.J."/>
            <person name="Beare D.M."/>
            <person name="Dunham I."/>
        </authorList>
    </citation>
    <scope>NUCLEOTIDE SEQUENCE [LARGE SCALE MRNA] (ISOFORM 1)</scope>
</reference>
<reference key="4">
    <citation type="journal article" date="2004" name="Nat. Genet.">
        <title>Complete sequencing and characterization of 21,243 full-length human cDNAs.</title>
        <authorList>
            <person name="Ota T."/>
            <person name="Suzuki Y."/>
            <person name="Nishikawa T."/>
            <person name="Otsuki T."/>
            <person name="Sugiyama T."/>
            <person name="Irie R."/>
            <person name="Wakamatsu A."/>
            <person name="Hayashi K."/>
            <person name="Sato H."/>
            <person name="Nagai K."/>
            <person name="Kimura K."/>
            <person name="Makita H."/>
            <person name="Sekine M."/>
            <person name="Obayashi M."/>
            <person name="Nishi T."/>
            <person name="Shibahara T."/>
            <person name="Tanaka T."/>
            <person name="Ishii S."/>
            <person name="Yamamoto J."/>
            <person name="Saito K."/>
            <person name="Kawai Y."/>
            <person name="Isono Y."/>
            <person name="Nakamura Y."/>
            <person name="Nagahari K."/>
            <person name="Murakami K."/>
            <person name="Yasuda T."/>
            <person name="Iwayanagi T."/>
            <person name="Wagatsuma M."/>
            <person name="Shiratori A."/>
            <person name="Sudo H."/>
            <person name="Hosoiri T."/>
            <person name="Kaku Y."/>
            <person name="Kodaira H."/>
            <person name="Kondo H."/>
            <person name="Sugawara M."/>
            <person name="Takahashi M."/>
            <person name="Kanda K."/>
            <person name="Yokoi T."/>
            <person name="Furuya T."/>
            <person name="Kikkawa E."/>
            <person name="Omura Y."/>
            <person name="Abe K."/>
            <person name="Kamihara K."/>
            <person name="Katsuta N."/>
            <person name="Sato K."/>
            <person name="Tanikawa M."/>
            <person name="Yamazaki M."/>
            <person name="Ninomiya K."/>
            <person name="Ishibashi T."/>
            <person name="Yamashita H."/>
            <person name="Murakawa K."/>
            <person name="Fujimori K."/>
            <person name="Tanai H."/>
            <person name="Kimata M."/>
            <person name="Watanabe M."/>
            <person name="Hiraoka S."/>
            <person name="Chiba Y."/>
            <person name="Ishida S."/>
            <person name="Ono Y."/>
            <person name="Takiguchi S."/>
            <person name="Watanabe S."/>
            <person name="Yosida M."/>
            <person name="Hotuta T."/>
            <person name="Kusano J."/>
            <person name="Kanehori K."/>
            <person name="Takahashi-Fujii A."/>
            <person name="Hara H."/>
            <person name="Tanase T.-O."/>
            <person name="Nomura Y."/>
            <person name="Togiya S."/>
            <person name="Komai F."/>
            <person name="Hara R."/>
            <person name="Takeuchi K."/>
            <person name="Arita M."/>
            <person name="Imose N."/>
            <person name="Musashino K."/>
            <person name="Yuuki H."/>
            <person name="Oshima A."/>
            <person name="Sasaki N."/>
            <person name="Aotsuka S."/>
            <person name="Yoshikawa Y."/>
            <person name="Matsunawa H."/>
            <person name="Ichihara T."/>
            <person name="Shiohata N."/>
            <person name="Sano S."/>
            <person name="Moriya S."/>
            <person name="Momiyama H."/>
            <person name="Satoh N."/>
            <person name="Takami S."/>
            <person name="Terashima Y."/>
            <person name="Suzuki O."/>
            <person name="Nakagawa S."/>
            <person name="Senoh A."/>
            <person name="Mizoguchi H."/>
            <person name="Goto Y."/>
            <person name="Shimizu F."/>
            <person name="Wakebe H."/>
            <person name="Hishigaki H."/>
            <person name="Watanabe T."/>
            <person name="Sugiyama A."/>
            <person name="Takemoto M."/>
            <person name="Kawakami B."/>
            <person name="Yamazaki M."/>
            <person name="Watanabe K."/>
            <person name="Kumagai A."/>
            <person name="Itakura S."/>
            <person name="Fukuzumi Y."/>
            <person name="Fujimori Y."/>
            <person name="Komiyama M."/>
            <person name="Tashiro H."/>
            <person name="Tanigami A."/>
            <person name="Fujiwara T."/>
            <person name="Ono T."/>
            <person name="Yamada K."/>
            <person name="Fujii Y."/>
            <person name="Ozaki K."/>
            <person name="Hirao M."/>
            <person name="Ohmori Y."/>
            <person name="Kawabata A."/>
            <person name="Hikiji T."/>
            <person name="Kobatake N."/>
            <person name="Inagaki H."/>
            <person name="Ikema Y."/>
            <person name="Okamoto S."/>
            <person name="Okitani R."/>
            <person name="Kawakami T."/>
            <person name="Noguchi S."/>
            <person name="Itoh T."/>
            <person name="Shigeta K."/>
            <person name="Senba T."/>
            <person name="Matsumura K."/>
            <person name="Nakajima Y."/>
            <person name="Mizuno T."/>
            <person name="Morinaga M."/>
            <person name="Sasaki M."/>
            <person name="Togashi T."/>
            <person name="Oyama M."/>
            <person name="Hata H."/>
            <person name="Watanabe M."/>
            <person name="Komatsu T."/>
            <person name="Mizushima-Sugano J."/>
            <person name="Satoh T."/>
            <person name="Shirai Y."/>
            <person name="Takahashi Y."/>
            <person name="Nakagawa K."/>
            <person name="Okumura K."/>
            <person name="Nagase T."/>
            <person name="Nomura N."/>
            <person name="Kikuchi H."/>
            <person name="Masuho Y."/>
            <person name="Yamashita R."/>
            <person name="Nakai K."/>
            <person name="Yada T."/>
            <person name="Nakamura Y."/>
            <person name="Ohara O."/>
            <person name="Isogai T."/>
            <person name="Sugano S."/>
        </authorList>
    </citation>
    <scope>NUCLEOTIDE SEQUENCE [LARGE SCALE MRNA] (ISOFORM 2)</scope>
    <source>
        <tissue>Small intestine</tissue>
    </source>
</reference>
<reference key="5">
    <citation type="submission" date="2004-06" db="EMBL/GenBank/DDBJ databases">
        <title>Cloning of human full open reading frames in Gateway(TM) system entry vector (pDONR201).</title>
        <authorList>
            <person name="Ebert L."/>
            <person name="Schick M."/>
            <person name="Neubert P."/>
            <person name="Schatten R."/>
            <person name="Henze S."/>
            <person name="Korn B."/>
        </authorList>
    </citation>
    <scope>NUCLEOTIDE SEQUENCE [LARGE SCALE MRNA] (ISOFORM 1)</scope>
</reference>
<reference key="6">
    <citation type="submission" date="2004-10" db="EMBL/GenBank/DDBJ databases">
        <title>Cloning of human full-length CDSs in BD Creator(TM) system donor vector.</title>
        <authorList>
            <person name="Kalnine N."/>
            <person name="Chen X."/>
            <person name="Rolfs A."/>
            <person name="Halleck A."/>
            <person name="Hines L."/>
            <person name="Eisenstein S."/>
            <person name="Koundinya M."/>
            <person name="Raphael J."/>
            <person name="Moreira D."/>
            <person name="Kelley T."/>
            <person name="LaBaer J."/>
            <person name="Lin Y."/>
            <person name="Phelan M."/>
            <person name="Farmer A."/>
        </authorList>
    </citation>
    <scope>NUCLEOTIDE SEQUENCE [LARGE SCALE MRNA] (ISOFORM 1)</scope>
</reference>
<reference key="7">
    <citation type="journal article" date="1999" name="Nature">
        <title>The DNA sequence of human chromosome 22.</title>
        <authorList>
            <person name="Dunham I."/>
            <person name="Hunt A.R."/>
            <person name="Collins J.E."/>
            <person name="Bruskiewich R."/>
            <person name="Beare D.M."/>
            <person name="Clamp M."/>
            <person name="Smink L.J."/>
            <person name="Ainscough R."/>
            <person name="Almeida J.P."/>
            <person name="Babbage A.K."/>
            <person name="Bagguley C."/>
            <person name="Bailey J."/>
            <person name="Barlow K.F."/>
            <person name="Bates K.N."/>
            <person name="Beasley O.P."/>
            <person name="Bird C.P."/>
            <person name="Blakey S.E."/>
            <person name="Bridgeman A.M."/>
            <person name="Buck D."/>
            <person name="Burgess J."/>
            <person name="Burrill W.D."/>
            <person name="Burton J."/>
            <person name="Carder C."/>
            <person name="Carter N.P."/>
            <person name="Chen Y."/>
            <person name="Clark G."/>
            <person name="Clegg S.M."/>
            <person name="Cobley V.E."/>
            <person name="Cole C.G."/>
            <person name="Collier R.E."/>
            <person name="Connor R."/>
            <person name="Conroy D."/>
            <person name="Corby N.R."/>
            <person name="Coville G.J."/>
            <person name="Cox A.V."/>
            <person name="Davis J."/>
            <person name="Dawson E."/>
            <person name="Dhami P.D."/>
            <person name="Dockree C."/>
            <person name="Dodsworth S.J."/>
            <person name="Durbin R.M."/>
            <person name="Ellington A.G."/>
            <person name="Evans K.L."/>
            <person name="Fey J.M."/>
            <person name="Fleming K."/>
            <person name="French L."/>
            <person name="Garner A.A."/>
            <person name="Gilbert J.G.R."/>
            <person name="Goward M.E."/>
            <person name="Grafham D.V."/>
            <person name="Griffiths M.N.D."/>
            <person name="Hall C."/>
            <person name="Hall R.E."/>
            <person name="Hall-Tamlyn G."/>
            <person name="Heathcott R.W."/>
            <person name="Ho S."/>
            <person name="Holmes S."/>
            <person name="Hunt S.E."/>
            <person name="Jones M.C."/>
            <person name="Kershaw J."/>
            <person name="Kimberley A.M."/>
            <person name="King A."/>
            <person name="Laird G.K."/>
            <person name="Langford C.F."/>
            <person name="Leversha M.A."/>
            <person name="Lloyd C."/>
            <person name="Lloyd D.M."/>
            <person name="Martyn I.D."/>
            <person name="Mashreghi-Mohammadi M."/>
            <person name="Matthews L.H."/>
            <person name="Mccann O.T."/>
            <person name="Mcclay J."/>
            <person name="Mclaren S."/>
            <person name="McMurray A.A."/>
            <person name="Milne S.A."/>
            <person name="Mortimore B.J."/>
            <person name="Odell C.N."/>
            <person name="Pavitt R."/>
            <person name="Pearce A.V."/>
            <person name="Pearson D."/>
            <person name="Phillimore B.J.C.T."/>
            <person name="Phillips S.H."/>
            <person name="Plumb R.W."/>
            <person name="Ramsay H."/>
            <person name="Ramsey Y."/>
            <person name="Rogers L."/>
            <person name="Ross M.T."/>
            <person name="Scott C.E."/>
            <person name="Sehra H.K."/>
            <person name="Skuce C.D."/>
            <person name="Smalley S."/>
            <person name="Smith M.L."/>
            <person name="Soderlund C."/>
            <person name="Spragon L."/>
            <person name="Steward C.A."/>
            <person name="Sulston J.E."/>
            <person name="Swann R.M."/>
            <person name="Vaudin M."/>
            <person name="Wall M."/>
            <person name="Wallis J.M."/>
            <person name="Whiteley M.N."/>
            <person name="Willey D.L."/>
            <person name="Williams L."/>
            <person name="Williams S.A."/>
            <person name="Williamson H."/>
            <person name="Wilmer T.E."/>
            <person name="Wilming L."/>
            <person name="Wright C.L."/>
            <person name="Hubbard T."/>
            <person name="Bentley D.R."/>
            <person name="Beck S."/>
            <person name="Rogers J."/>
            <person name="Shimizu N."/>
            <person name="Minoshima S."/>
            <person name="Kawasaki K."/>
            <person name="Sasaki T."/>
            <person name="Asakawa S."/>
            <person name="Kudoh J."/>
            <person name="Shintani A."/>
            <person name="Shibuya K."/>
            <person name="Yoshizaki Y."/>
            <person name="Aoki N."/>
            <person name="Mitsuyama S."/>
            <person name="Roe B.A."/>
            <person name="Chen F."/>
            <person name="Chu L."/>
            <person name="Crabtree J."/>
            <person name="Deschamps S."/>
            <person name="Do A."/>
            <person name="Do T."/>
            <person name="Dorman A."/>
            <person name="Fang F."/>
            <person name="Fu Y."/>
            <person name="Hu P."/>
            <person name="Hua A."/>
            <person name="Kenton S."/>
            <person name="Lai H."/>
            <person name="Lao H.I."/>
            <person name="Lewis J."/>
            <person name="Lewis S."/>
            <person name="Lin S.-P."/>
            <person name="Loh P."/>
            <person name="Malaj E."/>
            <person name="Nguyen T."/>
            <person name="Pan H."/>
            <person name="Phan S."/>
            <person name="Qi S."/>
            <person name="Qian Y."/>
            <person name="Ray L."/>
            <person name="Ren Q."/>
            <person name="Shaull S."/>
            <person name="Sloan D."/>
            <person name="Song L."/>
            <person name="Wang Q."/>
            <person name="Wang Y."/>
            <person name="Wang Z."/>
            <person name="White J."/>
            <person name="Willingham D."/>
            <person name="Wu H."/>
            <person name="Yao Z."/>
            <person name="Zhan M."/>
            <person name="Zhang G."/>
            <person name="Chissoe S."/>
            <person name="Murray J."/>
            <person name="Miller N."/>
            <person name="Minx P."/>
            <person name="Fulton R."/>
            <person name="Johnson D."/>
            <person name="Bemis G."/>
            <person name="Bentley D."/>
            <person name="Bradshaw H."/>
            <person name="Bourne S."/>
            <person name="Cordes M."/>
            <person name="Du Z."/>
            <person name="Fulton L."/>
            <person name="Goela D."/>
            <person name="Graves T."/>
            <person name="Hawkins J."/>
            <person name="Hinds K."/>
            <person name="Kemp K."/>
            <person name="Latreille P."/>
            <person name="Layman D."/>
            <person name="Ozersky P."/>
            <person name="Rohlfing T."/>
            <person name="Scheet P."/>
            <person name="Walker C."/>
            <person name="Wamsley A."/>
            <person name="Wohldmann P."/>
            <person name="Pepin K."/>
            <person name="Nelson J."/>
            <person name="Korf I."/>
            <person name="Bedell J.A."/>
            <person name="Hillier L.W."/>
            <person name="Mardis E."/>
            <person name="Waterston R."/>
            <person name="Wilson R."/>
            <person name="Emanuel B.S."/>
            <person name="Shaikh T."/>
            <person name="Kurahashi H."/>
            <person name="Saitta S."/>
            <person name="Budarf M.L."/>
            <person name="McDermid H.E."/>
            <person name="Johnson A."/>
            <person name="Wong A.C.C."/>
            <person name="Morrow B.E."/>
            <person name="Edelmann L."/>
            <person name="Kim U.J."/>
            <person name="Shizuya H."/>
            <person name="Simon M.I."/>
            <person name="Dumanski J.P."/>
            <person name="Peyrard M."/>
            <person name="Kedra D."/>
            <person name="Seroussi E."/>
            <person name="Fransson I."/>
            <person name="Tapia I."/>
            <person name="Bruder C.E."/>
            <person name="O'Brien K.P."/>
            <person name="Wilkinson P."/>
            <person name="Bodenteich A."/>
            <person name="Hartman K."/>
            <person name="Hu X."/>
            <person name="Khan A.S."/>
            <person name="Lane L."/>
            <person name="Tilahun Y."/>
            <person name="Wright H."/>
        </authorList>
    </citation>
    <scope>NUCLEOTIDE SEQUENCE [LARGE SCALE GENOMIC DNA]</scope>
</reference>
<reference key="8">
    <citation type="journal article" date="2004" name="Genome Res.">
        <title>The status, quality, and expansion of the NIH full-length cDNA project: the Mammalian Gene Collection (MGC).</title>
        <authorList>
            <consortium name="The MGC Project Team"/>
        </authorList>
    </citation>
    <scope>NUCLEOTIDE SEQUENCE [LARGE SCALE MRNA] (ISOFORM 1)</scope>
    <source>
        <tissue>Placenta</tissue>
        <tissue>Skin</tissue>
    </source>
</reference>
<reference key="9">
    <citation type="journal article" date="1998" name="J. Biol. Chem.">
        <title>Functional analysis of Sox10 mutations found in human Waardenburg-Hirschsprung patients.</title>
        <authorList>
            <person name="Kuhlbrodt K."/>
            <person name="Schmidt C."/>
            <person name="Sock E."/>
            <person name="Pingault V."/>
            <person name="Bondurand N."/>
            <person name="Goossens M."/>
            <person name="Wegner M."/>
        </authorList>
    </citation>
    <scope>CHARACTERIZATION</scope>
</reference>
<reference key="10">
    <citation type="journal article" date="2002" name="Mol. Cell. Biol.">
        <title>Sox10 is an active nucleocytoplasmic shuttle protein, and shuttling is crucial for Sox10-mediated transactivation.</title>
        <authorList>
            <person name="Rehberg S."/>
            <person name="Lischka P."/>
            <person name="Glaser G."/>
            <person name="Stamminger T."/>
            <person name="Wegner M."/>
            <person name="Rosorius O."/>
        </authorList>
    </citation>
    <scope>NUCLEOCYTOPLASMIC SHUTTLING</scope>
    <scope>SUBCELLULAR LOCATION</scope>
</reference>
<reference key="11">
    <citation type="journal article" date="2009" name="Mol. Cell. Proteomics">
        <title>Large-scale proteomics analysis of the human kinome.</title>
        <authorList>
            <person name="Oppermann F.S."/>
            <person name="Gnad F."/>
            <person name="Olsen J.V."/>
            <person name="Hornberger R."/>
            <person name="Greff Z."/>
            <person name="Keri G."/>
            <person name="Mann M."/>
            <person name="Daub H."/>
        </authorList>
    </citation>
    <scope>PHOSPHORYLATION [LARGE SCALE ANALYSIS] AT SER-24</scope>
    <scope>IDENTIFICATION BY MASS SPECTROMETRY [LARGE SCALE ANALYSIS]</scope>
</reference>
<reference key="12">
    <citation type="journal article" date="2012" name="Hum. Genet.">
        <title>Functional analysis of Waardenburg syndrome-associated PAX3 and SOX10 mutations: report of a dominant-negative SOX10 mutation in Waardenburg syndrome type II.</title>
        <authorList>
            <person name="Zhang H."/>
            <person name="Chen H."/>
            <person name="Luo H."/>
            <person name="An J."/>
            <person name="Sun L."/>
            <person name="Mei L."/>
            <person name="He C."/>
            <person name="Jiang L."/>
            <person name="Jiang W."/>
            <person name="Xia K."/>
            <person name="Li J.D."/>
            <person name="Feng Y."/>
        </authorList>
    </citation>
    <scope>FUNCTION</scope>
    <scope>INTERACTION WITH PAX3</scope>
</reference>
<reference key="13">
    <citation type="journal article" date="1999" name="Hum. Mol. Genet.">
        <title>A molecular analysis of the Yemenite deaf-blind hypopigmentation syndrome: SOX10 dysfunction causes different neurocristopathies.</title>
        <authorList>
            <person name="Bondurand N."/>
            <person name="Kuhlbrodt K."/>
            <person name="Pingault V."/>
            <person name="Enderich J."/>
            <person name="Sajus M."/>
            <person name="Tommerup N."/>
            <person name="Warburg M."/>
            <person name="Hennekam R.C.M."/>
            <person name="Read A.P."/>
            <person name="Wegner M."/>
            <person name="Goossens M."/>
        </authorList>
    </citation>
    <scope>VARIANT WS2E THR-135</scope>
</reference>
<reference key="14">
    <citation type="journal article" date="2000" name="Am. J. Hum. Genet.">
        <title>Neurological phenotype in Waardenburg syndrome type 4 correlates with novel SOX10 truncating mutations and expression in developing brain.</title>
        <authorList>
            <person name="Touraine R.L."/>
            <person name="Attie-Bitach T."/>
            <person name="Manceau E."/>
            <person name="Korsch E."/>
            <person name="Sarda P."/>
            <person name="Pingault V."/>
            <person name="Encha-Razavi F."/>
            <person name="Pelet A."/>
            <person name="Auge J."/>
            <person name="Nivelon-Chevallier A."/>
            <person name="Holschneider A.M."/>
            <person name="Munnes M."/>
            <person name="Doerfler W."/>
            <person name="Goossens M."/>
            <person name="Munnich A."/>
            <person name="Vekemans M."/>
            <person name="Lyonnet S."/>
        </authorList>
    </citation>
    <scope>INVOLVEMENT IN PCWH</scope>
</reference>
<reference key="15">
    <citation type="journal article" date="2000" name="Am. J. Hum. Genet.">
        <authorList>
            <person name="Touraine R.L."/>
            <person name="Attie-Bitach T."/>
            <person name="Manceau E."/>
            <person name="Korsch E."/>
            <person name="Sarda P."/>
            <person name="Pingault V."/>
            <person name="Encha-Razavi F."/>
            <person name="Pelet A."/>
            <person name="Auge J."/>
            <person name="Nivelon-Chevallier A."/>
            <person name="Holschneider A.M."/>
            <person name="Munnes M."/>
            <person name="Doerfler W."/>
            <person name="Goossens M."/>
            <person name="Munnich A."/>
            <person name="Vekemans M."/>
            <person name="Lyonnet S."/>
        </authorList>
    </citation>
    <scope>ERRATUM OF PUBMED:10762540</scope>
</reference>
<reference key="16">
    <citation type="journal article" date="2004" name="Nat. Genet.">
        <title>Molecular mechanism for distinct neurological phenotypes conveyed by allelic truncating mutations.</title>
        <authorList>
            <person name="Inoue K."/>
            <person name="Khajavi M."/>
            <person name="Ohyama T."/>
            <person name="Hirabayashi S."/>
            <person name="Wilson J."/>
            <person name="Reggin J.D."/>
            <person name="Mancias P."/>
            <person name="Butler I.J."/>
            <person name="Wilkinson M.F."/>
            <person name="Wegner M."/>
            <person name="Lupski J.R."/>
        </authorList>
    </citation>
    <scope>INVOLVEMENT IN PCWH</scope>
</reference>
<reference key="17">
    <citation type="journal article" date="2007" name="Am. J. Hum. Genet.">
        <title>Deletions at the SOX10 gene locus cause Waardenburg syndrome types 2 and 4.</title>
        <authorList>
            <person name="Bondurand N."/>
            <person name="Dastot-Le Moal F."/>
            <person name="Stanchina L."/>
            <person name="Collot N."/>
            <person name="Baral V."/>
            <person name="Marlin S."/>
            <person name="Attie-Bitach T."/>
            <person name="Giurgea I."/>
            <person name="Skopinski L."/>
            <person name="Reardon W."/>
            <person name="Toutain A."/>
            <person name="Sarda P."/>
            <person name="Echaieb A."/>
            <person name="Lackmy-Port-Lis M."/>
            <person name="Touraine R."/>
            <person name="Amiel J."/>
            <person name="Goossens M."/>
            <person name="Pingault V."/>
        </authorList>
    </citation>
    <scope>INVOLVEMENT IN WS2E</scope>
</reference>
<reference key="18">
    <citation type="journal article" date="2019" name="Nucleic Acids Res.">
        <title>The SOXE transcription factors-SOX8, SOX9 and SOX10-share a bi-partite transactivation mechanism.</title>
        <authorList>
            <person name="Haseeb A."/>
            <person name="Lefebvre V."/>
        </authorList>
    </citation>
    <scope>TRANSACTIVATION REGIONS</scope>
</reference>
<reference key="19">
    <citation type="journal article" date="2008" name="Am. J. Med. Genet. A">
        <title>A de novo missense mutation in the gene encoding the SOX10 transcription factor in a Spanish sporadic case of Waardenburg syndrome type IV.</title>
        <authorList>
            <person name="Morin M."/>
            <person name="Vinuela A."/>
            <person name="Rivera T."/>
            <person name="Villamar M."/>
            <person name="Moreno-Pelayo M.A."/>
            <person name="Moreno F."/>
            <person name="del Castillo I."/>
        </authorList>
    </citation>
    <scope>VARIANT WS4C VAL-157</scope>
</reference>
<reference key="20">
    <citation type="journal article" date="2009" name="Am. J. Med. Genet. A">
        <title>Aplasia of cochlear nerves and olfactory bulbs in association with SOX10 mutation.</title>
        <authorList>
            <person name="Barnett C.P."/>
            <person name="Mendoza-Londono R."/>
            <person name="Blaser S."/>
            <person name="Gillis J."/>
            <person name="Dupuis L."/>
            <person name="Levin A.V."/>
            <person name="Chiang P.W."/>
            <person name="Spector E."/>
            <person name="Reardon W."/>
        </authorList>
    </citation>
    <scope>VARIANT PCWH PRO-174</scope>
</reference>
<reference key="21">
    <citation type="journal article" date="2011" name="Hum. Mutat.">
        <title>Identification and functional analysis of SOX10 missense mutations in different subtypes of Waardenburg syndrome.</title>
        <authorList>
            <person name="Chaoui A."/>
            <person name="Watanabe Y."/>
            <person name="Touraine R."/>
            <person name="Baral V."/>
            <person name="Goossens M."/>
            <person name="Pingault V."/>
            <person name="Bondurand N."/>
        </authorList>
    </citation>
    <scope>VARIANTS WS4C TRP-106; PRO-145 AND VAL-157</scope>
    <scope>VARIANTS WS2E ILE-112 AND HIS-161</scope>
    <scope>VARIANTS PCWH ILE-112; HIS-131; ASN-150; PRO-174; ALA-175; LEU-175; ARG-175 AND ARG-321</scope>
    <scope>CHARACTERIZATION OF VARIANTS WS4C TRP-106; PRO-145 AND VAL-157</scope>
    <scope>CHARACTERIZATION OF VARIANTS WS2E ILE-112 AND HIS-161</scope>
    <scope>CHARACTERIZATION OF VARIANTS PCWH HIS-131; ASN-150; PRO-174; ALA-175; LEU-175 AND ARG-175</scope>
</reference>
<reference key="22">
    <citation type="journal article" date="2014" name="J. Clin. Endocrinol. Metab.">
        <title>The prevalence of CHD7 missense versus truncating mutations is higher in patients with Kallmann syndrome than in typical CHARGE patients.</title>
        <authorList>
            <person name="Marcos S."/>
            <person name="Sarfati J."/>
            <person name="Leroy C."/>
            <person name="Fouveaut C."/>
            <person name="Parent P."/>
            <person name="Metz C."/>
            <person name="Wolczynski S."/>
            <person name="Gerard M."/>
            <person name="Bieth E."/>
            <person name="Kurtz F."/>
            <person name="Verier-Mine O."/>
            <person name="Perrin L."/>
            <person name="Archambeaud F."/>
            <person name="Cabrol S."/>
            <person name="Rodien P."/>
            <person name="Hove H."/>
            <person name="Prescott T."/>
            <person name="Lacombe D."/>
            <person name="Christin-Maitre S."/>
            <person name="Touraine P."/>
            <person name="Hieronimus S."/>
            <person name="Dewailly D."/>
            <person name="Young J."/>
            <person name="Pugeat M."/>
            <person name="Hardelin J.P."/>
            <person name="Dode C."/>
        </authorList>
    </citation>
    <scope>VARIANTS THR-108; VAL-111; GLY-135; CYS-151 AND CYS-161</scope>
</reference>
<keyword id="KW-0010">Activator</keyword>
<keyword id="KW-0025">Alternative splicing</keyword>
<keyword id="KW-0963">Cytoplasm</keyword>
<keyword id="KW-0209">Deafness</keyword>
<keyword id="KW-0225">Disease variant</keyword>
<keyword id="KW-0238">DNA-binding</keyword>
<keyword id="KW-0367">Hirschsprung disease</keyword>
<keyword id="KW-0956">Kallmann syndrome</keyword>
<keyword id="KW-0472">Membrane</keyword>
<keyword id="KW-0496">Mitochondrion</keyword>
<keyword id="KW-1000">Mitochondrion outer membrane</keyword>
<keyword id="KW-0539">Nucleus</keyword>
<keyword id="KW-0597">Phosphoprotein</keyword>
<keyword id="KW-1267">Proteomics identification</keyword>
<keyword id="KW-1185">Reference proteome</keyword>
<keyword id="KW-0804">Transcription</keyword>
<keyword id="KW-0805">Transcription regulation</keyword>
<keyword id="KW-0897">Waardenburg syndrome</keyword>
<proteinExistence type="evidence at protein level"/>
<accession>P56693</accession>
<accession>B4DV62</accession>
<accession>Q6FHW7</accession>
<organism>
    <name type="scientific">Homo sapiens</name>
    <name type="common">Human</name>
    <dbReference type="NCBI Taxonomy" id="9606"/>
    <lineage>
        <taxon>Eukaryota</taxon>
        <taxon>Metazoa</taxon>
        <taxon>Chordata</taxon>
        <taxon>Craniata</taxon>
        <taxon>Vertebrata</taxon>
        <taxon>Euteleostomi</taxon>
        <taxon>Mammalia</taxon>
        <taxon>Eutheria</taxon>
        <taxon>Euarchontoglires</taxon>
        <taxon>Primates</taxon>
        <taxon>Haplorrhini</taxon>
        <taxon>Catarrhini</taxon>
        <taxon>Hominidae</taxon>
        <taxon>Homo</taxon>
    </lineage>
</organism>
<dbReference type="EMBL" id="AJ001183">
    <property type="protein sequence ID" value="CAA04576.1"/>
    <property type="molecule type" value="mRNA"/>
</dbReference>
<dbReference type="EMBL" id="CR456584">
    <property type="protein sequence ID" value="CAG30470.1"/>
    <property type="molecule type" value="mRNA"/>
</dbReference>
<dbReference type="EMBL" id="BT020029">
    <property type="protein sequence ID" value="AAV38832.1"/>
    <property type="molecule type" value="mRNA"/>
</dbReference>
<dbReference type="EMBL" id="AK300945">
    <property type="protein sequence ID" value="BAG62574.1"/>
    <property type="molecule type" value="mRNA"/>
</dbReference>
<dbReference type="EMBL" id="CR536571">
    <property type="protein sequence ID" value="CAG38808.1"/>
    <property type="molecule type" value="mRNA"/>
</dbReference>
<dbReference type="EMBL" id="AL031587">
    <property type="status" value="NOT_ANNOTATED_CDS"/>
    <property type="molecule type" value="Genomic_DNA"/>
</dbReference>
<dbReference type="EMBL" id="BC002824">
    <property type="protein sequence ID" value="AAH02824.1"/>
    <property type="molecule type" value="mRNA"/>
</dbReference>
<dbReference type="EMBL" id="BC007595">
    <property type="protein sequence ID" value="AAH07595.1"/>
    <property type="molecule type" value="mRNA"/>
</dbReference>
<dbReference type="CCDS" id="CCDS13964.1">
    <molecule id="P56693-1"/>
</dbReference>
<dbReference type="RefSeq" id="NP_008872.1">
    <molecule id="P56693-1"/>
    <property type="nucleotide sequence ID" value="NM_006941.4"/>
</dbReference>
<dbReference type="SMR" id="P56693"/>
<dbReference type="BioGRID" id="112546">
    <property type="interactions" value="72"/>
</dbReference>
<dbReference type="FunCoup" id="P56693">
    <property type="interactions" value="447"/>
</dbReference>
<dbReference type="IntAct" id="P56693">
    <property type="interactions" value="64"/>
</dbReference>
<dbReference type="MINT" id="P56693"/>
<dbReference type="STRING" id="9606.ENSP00000380093"/>
<dbReference type="GlyGen" id="P56693">
    <property type="glycosylation" value="1 site"/>
</dbReference>
<dbReference type="iPTMnet" id="P56693"/>
<dbReference type="PhosphoSitePlus" id="P56693"/>
<dbReference type="BioMuta" id="SOX10"/>
<dbReference type="DMDM" id="6175075"/>
<dbReference type="jPOST" id="P56693"/>
<dbReference type="MassIVE" id="P56693"/>
<dbReference type="PaxDb" id="9606-ENSP00000380093"/>
<dbReference type="PeptideAtlas" id="P56693"/>
<dbReference type="ProteomicsDB" id="5245"/>
<dbReference type="ProteomicsDB" id="56933">
    <molecule id="P56693-1"/>
</dbReference>
<dbReference type="Antibodypedia" id="3774">
    <property type="antibodies" value="1058 antibodies from 48 providers"/>
</dbReference>
<dbReference type="DNASU" id="6663"/>
<dbReference type="Ensembl" id="ENST00000360880.6">
    <molecule id="P56693-1"/>
    <property type="protein sequence ID" value="ENSP00000354130.2"/>
    <property type="gene ID" value="ENSG00000100146.20"/>
</dbReference>
<dbReference type="Ensembl" id="ENST00000396884.8">
    <molecule id="P56693-1"/>
    <property type="protein sequence ID" value="ENSP00000380093.2"/>
    <property type="gene ID" value="ENSG00000100146.20"/>
</dbReference>
<dbReference type="GeneID" id="6663"/>
<dbReference type="KEGG" id="hsa:6663"/>
<dbReference type="MANE-Select" id="ENST00000396884.8">
    <property type="protein sequence ID" value="ENSP00000380093.2"/>
    <property type="RefSeq nucleotide sequence ID" value="NM_006941.4"/>
    <property type="RefSeq protein sequence ID" value="NP_008872.1"/>
</dbReference>
<dbReference type="UCSC" id="uc003aun.2">
    <molecule id="P56693-1"/>
    <property type="organism name" value="human"/>
</dbReference>
<dbReference type="AGR" id="HGNC:11190"/>
<dbReference type="CTD" id="6663"/>
<dbReference type="DisGeNET" id="6663"/>
<dbReference type="GeneCards" id="SOX10"/>
<dbReference type="GeneReviews" id="SOX10"/>
<dbReference type="HGNC" id="HGNC:11190">
    <property type="gene designation" value="SOX10"/>
</dbReference>
<dbReference type="HPA" id="ENSG00000100146">
    <property type="expression patterns" value="Group enriched (brain, salivary gland)"/>
</dbReference>
<dbReference type="MalaCards" id="SOX10"/>
<dbReference type="MIM" id="602229">
    <property type="type" value="gene"/>
</dbReference>
<dbReference type="MIM" id="609136">
    <property type="type" value="phenotype"/>
</dbReference>
<dbReference type="MIM" id="611584">
    <property type="type" value="phenotype"/>
</dbReference>
<dbReference type="MIM" id="613266">
    <property type="type" value="phenotype"/>
</dbReference>
<dbReference type="neXtProt" id="NX_P56693"/>
<dbReference type="OpenTargets" id="ENSG00000100146"/>
<dbReference type="Orphanet" id="478">
    <property type="disease" value="Kallmann syndrome"/>
</dbReference>
<dbReference type="Orphanet" id="163746">
    <property type="disease" value="Peripheral demyelinating neuropathy-central dysmyelinating leukodystrophy-Waardenburg syndrome-Hirschsprung disease"/>
</dbReference>
<dbReference type="Orphanet" id="895">
    <property type="disease" value="Waardenburg syndrome type 2"/>
</dbReference>
<dbReference type="Orphanet" id="897">
    <property type="disease" value="Waardenburg-Shah syndrome"/>
</dbReference>
<dbReference type="PharmGKB" id="PA36027"/>
<dbReference type="VEuPathDB" id="HostDB:ENSG00000100146"/>
<dbReference type="eggNOG" id="KOG0527">
    <property type="taxonomic scope" value="Eukaryota"/>
</dbReference>
<dbReference type="GeneTree" id="ENSGT00940000158046"/>
<dbReference type="HOGENOM" id="CLU_031800_0_0_1"/>
<dbReference type="InParanoid" id="P56693"/>
<dbReference type="OMA" id="ATIQAHY"/>
<dbReference type="OrthoDB" id="6247875at2759"/>
<dbReference type="PAN-GO" id="P56693">
    <property type="GO annotations" value="8 GO annotations based on evolutionary models"/>
</dbReference>
<dbReference type="PhylomeDB" id="P56693"/>
<dbReference type="PathwayCommons" id="P56693"/>
<dbReference type="Reactome" id="R-HSA-9619665">
    <property type="pathway name" value="EGR2 and SOX10-mediated initiation of Schwann cell myelination"/>
</dbReference>
<dbReference type="Reactome" id="R-HSA-9764302">
    <property type="pathway name" value="Regulation of CDH19 Expression and Function"/>
</dbReference>
<dbReference type="Reactome" id="R-HSA-9824585">
    <property type="pathway name" value="Regulation of MITF-M-dependent genes involved in pigmentation"/>
</dbReference>
<dbReference type="Reactome" id="R-HSA-9856649">
    <property type="pathway name" value="Transcriptional and post-translational regulation of MITF-M expression and activity"/>
</dbReference>
<dbReference type="SignaLink" id="P56693"/>
<dbReference type="SIGNOR" id="P56693"/>
<dbReference type="BioGRID-ORCS" id="6663">
    <property type="hits" value="108 hits in 1188 CRISPR screens"/>
</dbReference>
<dbReference type="GeneWiki" id="SOX10"/>
<dbReference type="GenomeRNAi" id="6663"/>
<dbReference type="Pharos" id="P56693">
    <property type="development level" value="Tbio"/>
</dbReference>
<dbReference type="PRO" id="PR:P56693"/>
<dbReference type="Proteomes" id="UP000005640">
    <property type="component" value="Chromosome 22"/>
</dbReference>
<dbReference type="RNAct" id="P56693">
    <property type="molecule type" value="protein"/>
</dbReference>
<dbReference type="Bgee" id="ENSG00000100146">
    <property type="expression patterns" value="Expressed in inferior olivary complex and 164 other cell types or tissues"/>
</dbReference>
<dbReference type="ExpressionAtlas" id="P56693">
    <property type="expression patterns" value="baseline and differential"/>
</dbReference>
<dbReference type="GO" id="GO:0000785">
    <property type="term" value="C:chromatin"/>
    <property type="evidence" value="ECO:0000247"/>
    <property type="project" value="NTNU_SB"/>
</dbReference>
<dbReference type="GO" id="GO:0005741">
    <property type="term" value="C:mitochondrial outer membrane"/>
    <property type="evidence" value="ECO:0007669"/>
    <property type="project" value="UniProtKB-SubCell"/>
</dbReference>
<dbReference type="GO" id="GO:0005654">
    <property type="term" value="C:nucleoplasm"/>
    <property type="evidence" value="ECO:0000314"/>
    <property type="project" value="HPA"/>
</dbReference>
<dbReference type="GO" id="GO:0005634">
    <property type="term" value="C:nucleus"/>
    <property type="evidence" value="ECO:0000314"/>
    <property type="project" value="UniProtKB"/>
</dbReference>
<dbReference type="GO" id="GO:0003677">
    <property type="term" value="F:DNA binding"/>
    <property type="evidence" value="ECO:0000250"/>
    <property type="project" value="UniProtKB"/>
</dbReference>
<dbReference type="GO" id="GO:0001216">
    <property type="term" value="F:DNA-binding transcription activator activity"/>
    <property type="evidence" value="ECO:0000250"/>
    <property type="project" value="UniProtKB"/>
</dbReference>
<dbReference type="GO" id="GO:0001228">
    <property type="term" value="F:DNA-binding transcription activator activity, RNA polymerase II-specific"/>
    <property type="evidence" value="ECO:0000304"/>
    <property type="project" value="GO_Central"/>
</dbReference>
<dbReference type="GO" id="GO:0003700">
    <property type="term" value="F:DNA-binding transcription factor activity"/>
    <property type="evidence" value="ECO:0000250"/>
    <property type="project" value="UniProtKB"/>
</dbReference>
<dbReference type="GO" id="GO:0000981">
    <property type="term" value="F:DNA-binding transcription factor activity, RNA polymerase II-specific"/>
    <property type="evidence" value="ECO:0000247"/>
    <property type="project" value="NTNU_SB"/>
</dbReference>
<dbReference type="GO" id="GO:0140297">
    <property type="term" value="F:DNA-binding transcription factor binding"/>
    <property type="evidence" value="ECO:0007669"/>
    <property type="project" value="Ensembl"/>
</dbReference>
<dbReference type="GO" id="GO:0042802">
    <property type="term" value="F:identical protein binding"/>
    <property type="evidence" value="ECO:0000353"/>
    <property type="project" value="IntAct"/>
</dbReference>
<dbReference type="GO" id="GO:1990841">
    <property type="term" value="F:promoter-specific chromatin binding"/>
    <property type="evidence" value="ECO:0007669"/>
    <property type="project" value="Ensembl"/>
</dbReference>
<dbReference type="GO" id="GO:0000978">
    <property type="term" value="F:RNA polymerase II cis-regulatory region sequence-specific DNA binding"/>
    <property type="evidence" value="ECO:0000318"/>
    <property type="project" value="GO_Central"/>
</dbReference>
<dbReference type="GO" id="GO:1990837">
    <property type="term" value="F:sequence-specific double-stranded DNA binding"/>
    <property type="evidence" value="ECO:0000314"/>
    <property type="project" value="ARUK-UCL"/>
</dbReference>
<dbReference type="GO" id="GO:0000976">
    <property type="term" value="F:transcription cis-regulatory region binding"/>
    <property type="evidence" value="ECO:0000250"/>
    <property type="project" value="UniProtKB"/>
</dbReference>
<dbReference type="GO" id="GO:0009653">
    <property type="term" value="P:anatomical structure morphogenesis"/>
    <property type="evidence" value="ECO:0000304"/>
    <property type="project" value="ProtInc"/>
</dbReference>
<dbReference type="GO" id="GO:0048469">
    <property type="term" value="P:cell maturation"/>
    <property type="evidence" value="ECO:0007669"/>
    <property type="project" value="Ensembl"/>
</dbReference>
<dbReference type="GO" id="GO:0071393">
    <property type="term" value="P:cellular response to progesterone stimulus"/>
    <property type="evidence" value="ECO:0007669"/>
    <property type="project" value="Ensembl"/>
</dbReference>
<dbReference type="GO" id="GO:0071466">
    <property type="term" value="P:cellular response to xenobiotic stimulus"/>
    <property type="evidence" value="ECO:0007669"/>
    <property type="project" value="Ensembl"/>
</dbReference>
<dbReference type="GO" id="GO:0022010">
    <property type="term" value="P:central nervous system myelination"/>
    <property type="evidence" value="ECO:0000250"/>
    <property type="project" value="UniProtKB"/>
</dbReference>
<dbReference type="GO" id="GO:0048589">
    <property type="term" value="P:developmental growth"/>
    <property type="evidence" value="ECO:0007669"/>
    <property type="project" value="Ensembl"/>
</dbReference>
<dbReference type="GO" id="GO:0048546">
    <property type="term" value="P:digestive tract morphogenesis"/>
    <property type="evidence" value="ECO:0007669"/>
    <property type="project" value="Ensembl"/>
</dbReference>
<dbReference type="GO" id="GO:0048484">
    <property type="term" value="P:enteric nervous system development"/>
    <property type="evidence" value="ECO:0000318"/>
    <property type="project" value="GO_Central"/>
</dbReference>
<dbReference type="GO" id="GO:0001701">
    <property type="term" value="P:in utero embryonic development"/>
    <property type="evidence" value="ECO:0007669"/>
    <property type="project" value="Ensembl"/>
</dbReference>
<dbReference type="GO" id="GO:0032808">
    <property type="term" value="P:lacrimal gland development"/>
    <property type="evidence" value="ECO:0007669"/>
    <property type="project" value="Ensembl"/>
</dbReference>
<dbReference type="GO" id="GO:0030318">
    <property type="term" value="P:melanocyte differentiation"/>
    <property type="evidence" value="ECO:0007669"/>
    <property type="project" value="Ensembl"/>
</dbReference>
<dbReference type="GO" id="GO:0061138">
    <property type="term" value="P:morphogenesis of a branching epithelium"/>
    <property type="evidence" value="ECO:0007669"/>
    <property type="project" value="Ensembl"/>
</dbReference>
<dbReference type="GO" id="GO:0002009">
    <property type="term" value="P:morphogenesis of an epithelium"/>
    <property type="evidence" value="ECO:0000318"/>
    <property type="project" value="GO_Central"/>
</dbReference>
<dbReference type="GO" id="GO:0043066">
    <property type="term" value="P:negative regulation of apoptotic process"/>
    <property type="evidence" value="ECO:0007669"/>
    <property type="project" value="Ensembl"/>
</dbReference>
<dbReference type="GO" id="GO:0090090">
    <property type="term" value="P:negative regulation of canonical Wnt signaling pathway"/>
    <property type="evidence" value="ECO:0007669"/>
    <property type="project" value="Ensembl"/>
</dbReference>
<dbReference type="GO" id="GO:0010626">
    <property type="term" value="P:negative regulation of Schwann cell proliferation"/>
    <property type="evidence" value="ECO:0007669"/>
    <property type="project" value="Ensembl"/>
</dbReference>
<dbReference type="GO" id="GO:0000122">
    <property type="term" value="P:negative regulation of transcription by RNA polymerase II"/>
    <property type="evidence" value="ECO:0000318"/>
    <property type="project" value="GO_Central"/>
</dbReference>
<dbReference type="GO" id="GO:0001755">
    <property type="term" value="P:neural crest cell migration"/>
    <property type="evidence" value="ECO:0000318"/>
    <property type="project" value="GO_Central"/>
</dbReference>
<dbReference type="GO" id="GO:0007405">
    <property type="term" value="P:neuroblast proliferation"/>
    <property type="evidence" value="ECO:0007669"/>
    <property type="project" value="Ensembl"/>
</dbReference>
<dbReference type="GO" id="GO:0014003">
    <property type="term" value="P:oligodendrocyte development"/>
    <property type="evidence" value="ECO:0000250"/>
    <property type="project" value="UniProtKB"/>
</dbReference>
<dbReference type="GO" id="GO:0048709">
    <property type="term" value="P:oligodendrocyte differentiation"/>
    <property type="evidence" value="ECO:0000250"/>
    <property type="project" value="UniProtKB"/>
</dbReference>
<dbReference type="GO" id="GO:0007422">
    <property type="term" value="P:peripheral nervous system development"/>
    <property type="evidence" value="ECO:0000318"/>
    <property type="project" value="GO_Central"/>
</dbReference>
<dbReference type="GO" id="GO:0045893">
    <property type="term" value="P:positive regulation of DNA-templated transcription"/>
    <property type="evidence" value="ECO:0000250"/>
    <property type="project" value="UniProtKB"/>
</dbReference>
<dbReference type="GO" id="GO:0010628">
    <property type="term" value="P:positive regulation of gene expression"/>
    <property type="evidence" value="ECO:0007669"/>
    <property type="project" value="Ensembl"/>
</dbReference>
<dbReference type="GO" id="GO:0014015">
    <property type="term" value="P:positive regulation of gliogenesis"/>
    <property type="evidence" value="ECO:0007669"/>
    <property type="project" value="Ensembl"/>
</dbReference>
<dbReference type="GO" id="GO:0031643">
    <property type="term" value="P:positive regulation of myelination"/>
    <property type="evidence" value="ECO:0007669"/>
    <property type="project" value="Ensembl"/>
</dbReference>
<dbReference type="GO" id="GO:0002052">
    <property type="term" value="P:positive regulation of neuroblast proliferation"/>
    <property type="evidence" value="ECO:0007669"/>
    <property type="project" value="Ensembl"/>
</dbReference>
<dbReference type="GO" id="GO:0006357">
    <property type="term" value="P:regulation of transcription by RNA polymerase II"/>
    <property type="evidence" value="ECO:0000304"/>
    <property type="project" value="GO_Central"/>
</dbReference>
<dbReference type="GO" id="GO:0006368">
    <property type="term" value="P:transcription elongation by RNA polymerase II"/>
    <property type="evidence" value="ECO:0007669"/>
    <property type="project" value="Ensembl"/>
</dbReference>
<dbReference type="CDD" id="cd22031">
    <property type="entry name" value="HMG-box_SoxE"/>
    <property type="match status" value="1"/>
</dbReference>
<dbReference type="FunFam" id="1.10.30.10:FF:000004">
    <property type="entry name" value="Transcription factor SOX-10"/>
    <property type="match status" value="1"/>
</dbReference>
<dbReference type="Gene3D" id="1.10.30.10">
    <property type="entry name" value="High mobility group box domain"/>
    <property type="match status" value="1"/>
</dbReference>
<dbReference type="InterPro" id="IPR009071">
    <property type="entry name" value="HMG_box_dom"/>
</dbReference>
<dbReference type="InterPro" id="IPR036910">
    <property type="entry name" value="HMG_box_dom_sf"/>
</dbReference>
<dbReference type="InterPro" id="IPR022151">
    <property type="entry name" value="Sox_N"/>
</dbReference>
<dbReference type="InterPro" id="IPR050917">
    <property type="entry name" value="SOX_TF"/>
</dbReference>
<dbReference type="PANTHER" id="PTHR45803">
    <property type="entry name" value="SOX100B"/>
    <property type="match status" value="1"/>
</dbReference>
<dbReference type="PANTHER" id="PTHR45803:SF6">
    <property type="entry name" value="TRANSCRIPTION FACTOR SOX-10"/>
    <property type="match status" value="1"/>
</dbReference>
<dbReference type="Pfam" id="PF00505">
    <property type="entry name" value="HMG_box"/>
    <property type="match status" value="1"/>
</dbReference>
<dbReference type="Pfam" id="PF12444">
    <property type="entry name" value="Sox_N"/>
    <property type="match status" value="1"/>
</dbReference>
<dbReference type="SMART" id="SM00398">
    <property type="entry name" value="HMG"/>
    <property type="match status" value="1"/>
</dbReference>
<dbReference type="SUPFAM" id="SSF47095">
    <property type="entry name" value="HMG-box"/>
    <property type="match status" value="1"/>
</dbReference>
<dbReference type="PROSITE" id="PS50118">
    <property type="entry name" value="HMG_BOX_2"/>
    <property type="match status" value="1"/>
</dbReference>
<protein>
    <recommendedName>
        <fullName>Transcription factor SOX-10</fullName>
    </recommendedName>
</protein>
<comment type="function">
    <text evidence="1 3 14">Transcription factor that plays a central role in developing and mature glia (By similarity). Specifically activates expression of myelin genes, during oligodendrocyte (OL) maturation, such as DUSP15 and MYRF, thereby playing a central role in oligodendrocyte maturation and CNS myelination (By similarity). Once induced, MYRF cooperates with SOX10 to implement the myelination program (By similarity). Transcriptional activator of MITF, acting synergistically with PAX3 (PubMed:21965087). Transcriptional activator of MBP, via binding to the gene promoter (By similarity).</text>
</comment>
<comment type="subunit">
    <text evidence="3 14">Monomer. Interacts with ARMCX3 at the mitochondrial outer membrane surface. Interacts with PAX3 (PubMed:21965087).</text>
</comment>
<comment type="interaction">
    <interactant intactId="EBI-1167533">
        <id>P56693</id>
    </interactant>
    <interactant intactId="EBI-12809220">
        <id>Q5SWW7</id>
        <label>C10orf55</label>
    </interactant>
    <organismsDiffer>false</organismsDiffer>
    <experiments>3</experiments>
</comment>
<comment type="interaction">
    <interactant intactId="EBI-1167533">
        <id>P56693</id>
    </interactant>
    <interactant intactId="EBI-748171">
        <id>O43186</id>
        <label>CRX</label>
    </interactant>
    <organismsDiffer>false</organismsDiffer>
    <experiments>3</experiments>
</comment>
<comment type="interaction">
    <interactant intactId="EBI-1167533">
        <id>P56693</id>
    </interactant>
    <interactant intactId="EBI-724310">
        <id>Q15038</id>
        <label>DAZAP2</label>
    </interactant>
    <organismsDiffer>false</organismsDiffer>
    <experiments>3</experiments>
</comment>
<comment type="interaction">
    <interactant intactId="EBI-1167533">
        <id>P56693</id>
    </interactant>
    <interactant intactId="EBI-12056251">
        <id>Q9ULV5-2</id>
        <label>HSF4</label>
    </interactant>
    <organismsDiffer>false</organismsDiffer>
    <experiments>3</experiments>
</comment>
<comment type="interaction">
    <interactant intactId="EBI-1167533">
        <id>P56693</id>
    </interactant>
    <interactant intactId="EBI-399080">
        <id>Q92993</id>
        <label>KAT5</label>
    </interactant>
    <organismsDiffer>false</organismsDiffer>
    <experiments>3</experiments>
</comment>
<comment type="interaction">
    <interactant intactId="EBI-1167533">
        <id>P56693</id>
    </interactant>
    <interactant intactId="EBI-11742507">
        <id>Q8TAP4-4</id>
        <label>LMO3</label>
    </interactant>
    <organismsDiffer>false</organismsDiffer>
    <experiments>3</experiments>
</comment>
<comment type="interaction">
    <interactant intactId="EBI-1167533">
        <id>P56693</id>
    </interactant>
    <interactant intactId="EBI-716006">
        <id>Q9Y5V3</id>
        <label>MAGED1</label>
    </interactant>
    <organismsDiffer>false</organismsDiffer>
    <experiments>3</experiments>
</comment>
<comment type="interaction">
    <interactant intactId="EBI-1167533">
        <id>P56693</id>
    </interactant>
    <interactant intactId="EBI-372942">
        <id>Q13287</id>
        <label>NMI</label>
    </interactant>
    <organismsDiffer>false</organismsDiffer>
    <experiments>2</experiments>
</comment>
<comment type="interaction">
    <interactant intactId="EBI-1167533">
        <id>P56693</id>
    </interactant>
    <interactant intactId="EBI-1167564">
        <id>P23760</id>
        <label>PAX3</label>
    </interactant>
    <organismsDiffer>false</organismsDiffer>
    <experiments>2</experiments>
</comment>
<comment type="interaction">
    <interactant intactId="EBI-1167533">
        <id>P56693</id>
    </interactant>
    <interactant intactId="EBI-1167176">
        <id>P20265</id>
        <label>POU3F2</label>
    </interactant>
    <organismsDiffer>false</organismsDiffer>
    <experiments>3</experiments>
</comment>
<comment type="interaction">
    <interactant intactId="EBI-1167533">
        <id>P56693</id>
    </interactant>
    <interactant intactId="EBI-12029004">
        <id>P78424</id>
        <label>POU6F2</label>
    </interactant>
    <organismsDiffer>false</organismsDiffer>
    <experiments>3</experiments>
</comment>
<comment type="interaction">
    <interactant intactId="EBI-1167533">
        <id>P56693</id>
    </interactant>
    <interactant intactId="EBI-25884072">
        <id>P62937-2</id>
        <label>PPIA</label>
    </interactant>
    <organismsDiffer>false</organismsDiffer>
    <experiments>3</experiments>
</comment>
<comment type="interaction">
    <interactant intactId="EBI-1167533">
        <id>P56693</id>
    </interactant>
    <interactant intactId="EBI-1383528">
        <id>P17252</id>
        <label>PRKCA</label>
    </interactant>
    <organismsDiffer>false</organismsDiffer>
    <experiments>3</experiments>
</comment>
<comment type="interaction">
    <interactant intactId="EBI-1167533">
        <id>P56693</id>
    </interactant>
    <interactant intactId="EBI-9090795">
        <id>Q15047-2</id>
        <label>SETDB1</label>
    </interactant>
    <organismsDiffer>false</organismsDiffer>
    <experiments>3</experiments>
</comment>
<comment type="interaction">
    <interactant intactId="EBI-1167533">
        <id>P56693</id>
    </interactant>
    <interactant intactId="EBI-1167533">
        <id>P56693</id>
        <label>SOX10</label>
    </interactant>
    <organismsDiffer>false</organismsDiffer>
    <experiments>2</experiments>
</comment>
<comment type="interaction">
    <interactant intactId="EBI-1167533">
        <id>P56693</id>
    </interactant>
    <interactant intactId="EBI-80140">
        <id>P63165</id>
        <label>SUMO1</label>
    </interactant>
    <organismsDiffer>false</organismsDiffer>
    <experiments>2</experiments>
</comment>
<comment type="interaction">
    <interactant intactId="EBI-1167533">
        <id>P56693</id>
    </interactant>
    <interactant intactId="EBI-80168">
        <id>P63279</id>
        <label>UBE2I</label>
    </interactant>
    <organismsDiffer>false</organismsDiffer>
    <experiments>2</experiments>
</comment>
<comment type="interaction">
    <interactant intactId="EBI-1167533">
        <id>P56693</id>
    </interactant>
    <interactant intactId="EBI-359832">
        <id>P61981</id>
        <label>YWHAG</label>
    </interactant>
    <organismsDiffer>false</organismsDiffer>
    <experiments>3</experiments>
</comment>
<comment type="subcellular location">
    <subcellularLocation>
        <location evidence="8">Cytoplasm</location>
    </subcellularLocation>
    <subcellularLocation>
        <location evidence="8">Nucleus</location>
    </subcellularLocation>
    <subcellularLocation>
        <location evidence="3">Mitochondrion outer membrane</location>
        <topology evidence="3">Peripheral membrane protein</topology>
        <orientation evidence="3">Cytoplasmic side</orientation>
    </subcellularLocation>
</comment>
<comment type="alternative products">
    <event type="alternative splicing"/>
    <isoform>
        <id>P56693-1</id>
        <name>1</name>
        <sequence type="displayed"/>
    </isoform>
    <isoform>
        <id>P56693-2</id>
        <name>2</name>
        <sequence type="described" ref="VSP_053874"/>
    </isoform>
</comment>
<comment type="tissue specificity">
    <text>Expressed in fetal brain and in adult brain, heart, small intestine and colon.</text>
</comment>
<comment type="domain">
    <text evidence="2">The transactivation domains TAM and TAC (for transactivation domain in the middle and at the C-terminus, respectively) are required to contact transcriptional coactivators and basal transcriptional machinery components and thereby induce gene transactivation.</text>
</comment>
<comment type="disease" evidence="6 10 13">
    <disease id="DI-01137">
        <name>Waardenburg syndrome 2E</name>
        <acronym>WS2E</acronym>
        <description>An autosomal dominant auditory-pigmentary disorder characterized by sensorineural deafness, pigmentary disturbances of the hair, skin and eyes, and absence of dystopia canthorum which is the lateral displacement of the inner canthus of each eye. Individuals with WS2E may have neurologic abnormalities, including mental impairment, myelination defects, and ataxia. Some patients can manifest features of Kallmann syndrome.</description>
        <dbReference type="MIM" id="611584"/>
    </disease>
    <text>The disease is caused by variants affecting the gene represented in this entry.</text>
</comment>
<comment type="disease" evidence="11 13 16">
    <disease id="DI-02676">
        <name>Waardenburg syndrome 4C</name>
        <acronym>WS4C</acronym>
        <description>A disorder characterized by the association of Waardenburg features (depigmentation and deafness) with the absence of enteric ganglia in the distal part of the intestine (Hirschsprung disease).</description>
        <dbReference type="MIM" id="613266"/>
    </disease>
    <text>The disease is caused by variants affecting the gene represented in this entry.</text>
</comment>
<comment type="disease" evidence="7 9 12 13">
    <disease id="DI-00909">
        <name>Peripheral demyelinating neuropathy, central dysmyelinating leukodystrophy, Waardenburg syndrome and Hirschsprung disease</name>
        <acronym>PCWH</acronym>
        <description>A complex neurocristopathy that includes features of 4 distinct syndromes: peripheral demyelinating neuropathy, central dysmyelinating leukodystrophy, Waardenburg syndrome and Hirschsprung disease.</description>
        <dbReference type="MIM" id="609136"/>
    </disease>
    <text>The disease is caused by variants affecting the gene represented in this entry.</text>
</comment>
<comment type="online information" name="Atlas of Genetics and Cytogenetics in Oncology and Haematology">
    <link uri="https://atlasgeneticsoncology.org/gene/43768/SOX10"/>
</comment>
<evidence type="ECO:0000250" key="1">
    <source>
        <dbReference type="UniProtKB" id="O55170"/>
    </source>
</evidence>
<evidence type="ECO:0000250" key="2">
    <source>
        <dbReference type="UniProtKB" id="P48436"/>
    </source>
</evidence>
<evidence type="ECO:0000250" key="3">
    <source>
        <dbReference type="UniProtKB" id="Q04888"/>
    </source>
</evidence>
<evidence type="ECO:0000255" key="4">
    <source>
        <dbReference type="PROSITE-ProRule" id="PRU00267"/>
    </source>
</evidence>
<evidence type="ECO:0000256" key="5">
    <source>
        <dbReference type="SAM" id="MobiDB-lite"/>
    </source>
</evidence>
<evidence type="ECO:0000269" key="6">
    <source>
    </source>
</evidence>
<evidence type="ECO:0000269" key="7">
    <source>
    </source>
</evidence>
<evidence type="ECO:0000269" key="8">
    <source>
    </source>
</evidence>
<evidence type="ECO:0000269" key="9">
    <source>
    </source>
</evidence>
<evidence type="ECO:0000269" key="10">
    <source>
    </source>
</evidence>
<evidence type="ECO:0000269" key="11">
    <source>
    </source>
</evidence>
<evidence type="ECO:0000269" key="12">
    <source>
    </source>
</evidence>
<evidence type="ECO:0000269" key="13">
    <source>
    </source>
</evidence>
<evidence type="ECO:0000269" key="14">
    <source>
    </source>
</evidence>
<evidence type="ECO:0000269" key="15">
    <source>
    </source>
</evidence>
<evidence type="ECO:0000269" key="16">
    <source>
    </source>
</evidence>
<evidence type="ECO:0000303" key="17">
    <source>
    </source>
</evidence>
<evidence type="ECO:0000303" key="18">
    <source>
    </source>
</evidence>
<evidence type="ECO:0000305" key="19"/>
<evidence type="ECO:0007744" key="20">
    <source>
    </source>
</evidence>
<gene>
    <name type="primary">SOX10</name>
</gene>